<comment type="function">
    <text evidence="1">Binds 16S rRNA, required for the assembly of 30S particles and may also be responsible for determining the conformation of the 16S rRNA at the A site.</text>
</comment>
<comment type="subunit">
    <text evidence="1">Part of the 30S ribosomal subunit. Contacts proteins S3 and S10.</text>
</comment>
<comment type="similarity">
    <text evidence="1">Belongs to the universal ribosomal protein uS14 family.</text>
</comment>
<organism>
    <name type="scientific">Vibrio campbellii (strain ATCC BAA-1116)</name>
    <dbReference type="NCBI Taxonomy" id="2902295"/>
    <lineage>
        <taxon>Bacteria</taxon>
        <taxon>Pseudomonadati</taxon>
        <taxon>Pseudomonadota</taxon>
        <taxon>Gammaproteobacteria</taxon>
        <taxon>Vibrionales</taxon>
        <taxon>Vibrionaceae</taxon>
        <taxon>Vibrio</taxon>
    </lineage>
</organism>
<dbReference type="EMBL" id="CP000789">
    <property type="protein sequence ID" value="ABU69744.1"/>
    <property type="molecule type" value="Genomic_DNA"/>
</dbReference>
<dbReference type="RefSeq" id="WP_004410442.1">
    <property type="nucleotide sequence ID" value="NC_022269.1"/>
</dbReference>
<dbReference type="SMR" id="A7N0J0"/>
<dbReference type="GeneID" id="83583110"/>
<dbReference type="KEGG" id="vha:VIBHAR_00743"/>
<dbReference type="PATRIC" id="fig|338187.25.peg.1871"/>
<dbReference type="Proteomes" id="UP000008152">
    <property type="component" value="Chromosome I"/>
</dbReference>
<dbReference type="GO" id="GO:0005737">
    <property type="term" value="C:cytoplasm"/>
    <property type="evidence" value="ECO:0007669"/>
    <property type="project" value="UniProtKB-ARBA"/>
</dbReference>
<dbReference type="GO" id="GO:0015935">
    <property type="term" value="C:small ribosomal subunit"/>
    <property type="evidence" value="ECO:0007669"/>
    <property type="project" value="TreeGrafter"/>
</dbReference>
<dbReference type="GO" id="GO:0019843">
    <property type="term" value="F:rRNA binding"/>
    <property type="evidence" value="ECO:0007669"/>
    <property type="project" value="UniProtKB-UniRule"/>
</dbReference>
<dbReference type="GO" id="GO:0003735">
    <property type="term" value="F:structural constituent of ribosome"/>
    <property type="evidence" value="ECO:0007669"/>
    <property type="project" value="InterPro"/>
</dbReference>
<dbReference type="GO" id="GO:0006412">
    <property type="term" value="P:translation"/>
    <property type="evidence" value="ECO:0007669"/>
    <property type="project" value="UniProtKB-UniRule"/>
</dbReference>
<dbReference type="FunFam" id="1.10.287.1480:FF:000001">
    <property type="entry name" value="30S ribosomal protein S14"/>
    <property type="match status" value="1"/>
</dbReference>
<dbReference type="Gene3D" id="1.10.287.1480">
    <property type="match status" value="1"/>
</dbReference>
<dbReference type="HAMAP" id="MF_00537">
    <property type="entry name" value="Ribosomal_uS14_1"/>
    <property type="match status" value="1"/>
</dbReference>
<dbReference type="InterPro" id="IPR001209">
    <property type="entry name" value="Ribosomal_uS14"/>
</dbReference>
<dbReference type="InterPro" id="IPR023036">
    <property type="entry name" value="Ribosomal_uS14_bac/plastid"/>
</dbReference>
<dbReference type="InterPro" id="IPR018271">
    <property type="entry name" value="Ribosomal_uS14_CS"/>
</dbReference>
<dbReference type="NCBIfam" id="NF006477">
    <property type="entry name" value="PRK08881.1"/>
    <property type="match status" value="1"/>
</dbReference>
<dbReference type="PANTHER" id="PTHR19836">
    <property type="entry name" value="30S RIBOSOMAL PROTEIN S14"/>
    <property type="match status" value="1"/>
</dbReference>
<dbReference type="PANTHER" id="PTHR19836:SF19">
    <property type="entry name" value="SMALL RIBOSOMAL SUBUNIT PROTEIN US14M"/>
    <property type="match status" value="1"/>
</dbReference>
<dbReference type="Pfam" id="PF00253">
    <property type="entry name" value="Ribosomal_S14"/>
    <property type="match status" value="1"/>
</dbReference>
<dbReference type="SUPFAM" id="SSF57716">
    <property type="entry name" value="Glucocorticoid receptor-like (DNA-binding domain)"/>
    <property type="match status" value="1"/>
</dbReference>
<dbReference type="PROSITE" id="PS00527">
    <property type="entry name" value="RIBOSOMAL_S14"/>
    <property type="match status" value="1"/>
</dbReference>
<sequence length="101" mass="11412">MAKNSMKAREAKRAKLVAKFAEKRAALKAIISDVNASEEDRWNAVLTLQSLPRDSSASRQRNRCNQTGRPHGYLRKFGLSRIKVREACMKGEIPGLRKASW</sequence>
<evidence type="ECO:0000255" key="1">
    <source>
        <dbReference type="HAMAP-Rule" id="MF_00537"/>
    </source>
</evidence>
<evidence type="ECO:0000305" key="2"/>
<feature type="chain" id="PRO_1000128631" description="Small ribosomal subunit protein uS14">
    <location>
        <begin position="1"/>
        <end position="101"/>
    </location>
</feature>
<name>RS14_VIBC1</name>
<keyword id="KW-0687">Ribonucleoprotein</keyword>
<keyword id="KW-0689">Ribosomal protein</keyword>
<keyword id="KW-0694">RNA-binding</keyword>
<keyword id="KW-0699">rRNA-binding</keyword>
<gene>
    <name evidence="1" type="primary">rpsN</name>
    <name type="ordered locus">VIBHAR_00743</name>
</gene>
<protein>
    <recommendedName>
        <fullName evidence="1">Small ribosomal subunit protein uS14</fullName>
    </recommendedName>
    <alternativeName>
        <fullName evidence="2">30S ribosomal protein S14</fullName>
    </alternativeName>
</protein>
<accession>A7N0J0</accession>
<reference key="1">
    <citation type="submission" date="2007-08" db="EMBL/GenBank/DDBJ databases">
        <authorList>
            <consortium name="The Vibrio harveyi Genome Sequencing Project"/>
            <person name="Bassler B."/>
            <person name="Clifton S.W."/>
            <person name="Fulton L."/>
            <person name="Delehaunty K."/>
            <person name="Fronick C."/>
            <person name="Harrison M."/>
            <person name="Markivic C."/>
            <person name="Fulton R."/>
            <person name="Tin-Wollam A.-M."/>
            <person name="Shah N."/>
            <person name="Pepin K."/>
            <person name="Nash W."/>
            <person name="Thiruvilangam P."/>
            <person name="Bhonagiri V."/>
            <person name="Waters C."/>
            <person name="Tu K.C."/>
            <person name="Irgon J."/>
            <person name="Wilson R.K."/>
        </authorList>
    </citation>
    <scope>NUCLEOTIDE SEQUENCE [LARGE SCALE GENOMIC DNA]</scope>
    <source>
        <strain>ATCC BAA-1116 / BB120</strain>
    </source>
</reference>
<proteinExistence type="inferred from homology"/>